<comment type="function">
    <text evidence="1">Cleaves peptides in various proteins in a process that requires ATP hydrolysis. Has a chymotrypsin-like activity. Plays a major role in the degradation of misfolded proteins.</text>
</comment>
<comment type="catalytic activity">
    <reaction evidence="1">
        <text>Hydrolysis of proteins to small peptides in the presence of ATP and magnesium. alpha-casein is the usual test substrate. In the absence of ATP, only oligopeptides shorter than five residues are hydrolyzed (such as succinyl-Leu-Tyr-|-NHMec, and Leu-Tyr-Leu-|-Tyr-Trp, in which cleavage of the -Tyr-|-Leu- and -Tyr-|-Trp bonds also occurs).</text>
        <dbReference type="EC" id="3.4.21.92"/>
    </reaction>
</comment>
<comment type="subunit">
    <text evidence="1">Fourteen ClpP subunits assemble into 2 heptameric rings which stack back to back to give a disk-like structure with a central cavity, resembling the structure of eukaryotic proteasomes.</text>
</comment>
<comment type="subcellular location">
    <subcellularLocation>
        <location evidence="1">Cytoplasm</location>
    </subcellularLocation>
</comment>
<comment type="similarity">
    <text evidence="1">Belongs to the peptidase S14 family.</text>
</comment>
<dbReference type="EC" id="3.4.21.92" evidence="1"/>
<dbReference type="EMBL" id="AE017354">
    <property type="protein sequence ID" value="AAU27938.1"/>
    <property type="molecule type" value="Genomic_DNA"/>
</dbReference>
<dbReference type="RefSeq" id="WP_010947585.1">
    <property type="nucleotide sequence ID" value="NC_002942.5"/>
</dbReference>
<dbReference type="RefSeq" id="YP_095885.1">
    <property type="nucleotide sequence ID" value="NC_002942.5"/>
</dbReference>
<dbReference type="SMR" id="Q5ZUD9"/>
<dbReference type="STRING" id="272624.lpg1861"/>
<dbReference type="MEROPS" id="S14.001"/>
<dbReference type="PaxDb" id="272624-lpg1861"/>
<dbReference type="GeneID" id="57035853"/>
<dbReference type="KEGG" id="lpn:lpg1861"/>
<dbReference type="PATRIC" id="fig|272624.6.peg.1950"/>
<dbReference type="eggNOG" id="COG0740">
    <property type="taxonomic scope" value="Bacteria"/>
</dbReference>
<dbReference type="HOGENOM" id="CLU_058707_3_2_6"/>
<dbReference type="OrthoDB" id="9802800at2"/>
<dbReference type="PHI-base" id="PHI:6609"/>
<dbReference type="Proteomes" id="UP000000609">
    <property type="component" value="Chromosome"/>
</dbReference>
<dbReference type="GO" id="GO:0005737">
    <property type="term" value="C:cytoplasm"/>
    <property type="evidence" value="ECO:0007669"/>
    <property type="project" value="UniProtKB-SubCell"/>
</dbReference>
<dbReference type="GO" id="GO:0009368">
    <property type="term" value="C:endopeptidase Clp complex"/>
    <property type="evidence" value="ECO:0007669"/>
    <property type="project" value="TreeGrafter"/>
</dbReference>
<dbReference type="GO" id="GO:0004176">
    <property type="term" value="F:ATP-dependent peptidase activity"/>
    <property type="evidence" value="ECO:0007669"/>
    <property type="project" value="InterPro"/>
</dbReference>
<dbReference type="GO" id="GO:0051117">
    <property type="term" value="F:ATPase binding"/>
    <property type="evidence" value="ECO:0007669"/>
    <property type="project" value="TreeGrafter"/>
</dbReference>
<dbReference type="GO" id="GO:0004252">
    <property type="term" value="F:serine-type endopeptidase activity"/>
    <property type="evidence" value="ECO:0007669"/>
    <property type="project" value="UniProtKB-UniRule"/>
</dbReference>
<dbReference type="GO" id="GO:0006515">
    <property type="term" value="P:protein quality control for misfolded or incompletely synthesized proteins"/>
    <property type="evidence" value="ECO:0007669"/>
    <property type="project" value="TreeGrafter"/>
</dbReference>
<dbReference type="CDD" id="cd07017">
    <property type="entry name" value="S14_ClpP_2"/>
    <property type="match status" value="1"/>
</dbReference>
<dbReference type="FunFam" id="3.90.226.10:FF:000001">
    <property type="entry name" value="ATP-dependent Clp protease proteolytic subunit"/>
    <property type="match status" value="1"/>
</dbReference>
<dbReference type="Gene3D" id="3.90.226.10">
    <property type="entry name" value="2-enoyl-CoA Hydratase, Chain A, domain 1"/>
    <property type="match status" value="1"/>
</dbReference>
<dbReference type="HAMAP" id="MF_00444">
    <property type="entry name" value="ClpP"/>
    <property type="match status" value="1"/>
</dbReference>
<dbReference type="InterPro" id="IPR001907">
    <property type="entry name" value="ClpP"/>
</dbReference>
<dbReference type="InterPro" id="IPR029045">
    <property type="entry name" value="ClpP/crotonase-like_dom_sf"/>
</dbReference>
<dbReference type="InterPro" id="IPR023562">
    <property type="entry name" value="ClpP/TepA"/>
</dbReference>
<dbReference type="InterPro" id="IPR033135">
    <property type="entry name" value="ClpP_His_AS"/>
</dbReference>
<dbReference type="InterPro" id="IPR018215">
    <property type="entry name" value="ClpP_Ser_AS"/>
</dbReference>
<dbReference type="NCBIfam" id="TIGR00493">
    <property type="entry name" value="clpP"/>
    <property type="match status" value="1"/>
</dbReference>
<dbReference type="NCBIfam" id="NF001368">
    <property type="entry name" value="PRK00277.1"/>
    <property type="match status" value="1"/>
</dbReference>
<dbReference type="NCBIfam" id="NF009205">
    <property type="entry name" value="PRK12553.1"/>
    <property type="match status" value="1"/>
</dbReference>
<dbReference type="PANTHER" id="PTHR10381">
    <property type="entry name" value="ATP-DEPENDENT CLP PROTEASE PROTEOLYTIC SUBUNIT"/>
    <property type="match status" value="1"/>
</dbReference>
<dbReference type="PANTHER" id="PTHR10381:SF70">
    <property type="entry name" value="ATP-DEPENDENT CLP PROTEASE PROTEOLYTIC SUBUNIT"/>
    <property type="match status" value="1"/>
</dbReference>
<dbReference type="Pfam" id="PF00574">
    <property type="entry name" value="CLP_protease"/>
    <property type="match status" value="1"/>
</dbReference>
<dbReference type="PRINTS" id="PR00127">
    <property type="entry name" value="CLPPROTEASEP"/>
</dbReference>
<dbReference type="SUPFAM" id="SSF52096">
    <property type="entry name" value="ClpP/crotonase"/>
    <property type="match status" value="1"/>
</dbReference>
<dbReference type="PROSITE" id="PS00382">
    <property type="entry name" value="CLP_PROTEASE_HIS"/>
    <property type="match status" value="1"/>
</dbReference>
<dbReference type="PROSITE" id="PS00381">
    <property type="entry name" value="CLP_PROTEASE_SER"/>
    <property type="match status" value="1"/>
</dbReference>
<feature type="chain" id="PRO_0000179577" description="ATP-dependent Clp protease proteolytic subunit">
    <location>
        <begin position="1"/>
        <end position="214"/>
    </location>
</feature>
<feature type="active site" description="Nucleophile" evidence="1">
    <location>
        <position position="110"/>
    </location>
</feature>
<feature type="active site" evidence="1">
    <location>
        <position position="135"/>
    </location>
</feature>
<reference key="1">
    <citation type="journal article" date="2004" name="Science">
        <title>The genomic sequence of the accidental pathogen Legionella pneumophila.</title>
        <authorList>
            <person name="Chien M."/>
            <person name="Morozova I."/>
            <person name="Shi S."/>
            <person name="Sheng H."/>
            <person name="Chen J."/>
            <person name="Gomez S.M."/>
            <person name="Asamani G."/>
            <person name="Hill K."/>
            <person name="Nuara J."/>
            <person name="Feder M."/>
            <person name="Rineer J."/>
            <person name="Greenberg J.J."/>
            <person name="Steshenko V."/>
            <person name="Park S.H."/>
            <person name="Zhao B."/>
            <person name="Teplitskaya E."/>
            <person name="Edwards J.R."/>
            <person name="Pampou S."/>
            <person name="Georghiou A."/>
            <person name="Chou I.-C."/>
            <person name="Iannuccilli W."/>
            <person name="Ulz M.E."/>
            <person name="Kim D.H."/>
            <person name="Geringer-Sameth A."/>
            <person name="Goldsberry C."/>
            <person name="Morozov P."/>
            <person name="Fischer S.G."/>
            <person name="Segal G."/>
            <person name="Qu X."/>
            <person name="Rzhetsky A."/>
            <person name="Zhang P."/>
            <person name="Cayanis E."/>
            <person name="De Jong P.J."/>
            <person name="Ju J."/>
            <person name="Kalachikov S."/>
            <person name="Shuman H.A."/>
            <person name="Russo J.J."/>
        </authorList>
    </citation>
    <scope>NUCLEOTIDE SEQUENCE [LARGE SCALE GENOMIC DNA]</scope>
    <source>
        <strain>Philadelphia 1 / ATCC 33152 / DSM 7513</strain>
    </source>
</reference>
<accession>Q5ZUD9</accession>
<name>CLPP_LEGPH</name>
<sequence>MPGYSDNIIRNASGLIPMVIEQTSRGERSYDIYSRLLKERIIFLLGEVEDHMANLVVAQLLFLESENPEKDISLYINSPGGVVTAGLAIYDTMQFIKPDVSTLCIGQAASAAALLLCAGAEGKRFCLPNSRVMIHQPLGGYRGQATDIEIHARETLAVRERLNNIMAKHTKKTPDQIMRDTERDNFMSATQAMEYGLIDKVLYDRQVAGHSTDL</sequence>
<organism>
    <name type="scientific">Legionella pneumophila subsp. pneumophila (strain Philadelphia 1 / ATCC 33152 / DSM 7513)</name>
    <dbReference type="NCBI Taxonomy" id="272624"/>
    <lineage>
        <taxon>Bacteria</taxon>
        <taxon>Pseudomonadati</taxon>
        <taxon>Pseudomonadota</taxon>
        <taxon>Gammaproteobacteria</taxon>
        <taxon>Legionellales</taxon>
        <taxon>Legionellaceae</taxon>
        <taxon>Legionella</taxon>
    </lineage>
</organism>
<gene>
    <name evidence="1" type="primary">clpP</name>
    <name type="ordered locus">lpg1861</name>
</gene>
<proteinExistence type="inferred from homology"/>
<keyword id="KW-0963">Cytoplasm</keyword>
<keyword id="KW-0378">Hydrolase</keyword>
<keyword id="KW-0645">Protease</keyword>
<keyword id="KW-1185">Reference proteome</keyword>
<keyword id="KW-0720">Serine protease</keyword>
<protein>
    <recommendedName>
        <fullName evidence="1">ATP-dependent Clp protease proteolytic subunit</fullName>
        <ecNumber evidence="1">3.4.21.92</ecNumber>
    </recommendedName>
    <alternativeName>
        <fullName evidence="1">Endopeptidase Clp</fullName>
    </alternativeName>
</protein>
<evidence type="ECO:0000255" key="1">
    <source>
        <dbReference type="HAMAP-Rule" id="MF_00444"/>
    </source>
</evidence>